<comment type="function">
    <text evidence="1">Involved in DNA repair and RecF pathway recombination.</text>
</comment>
<comment type="similarity">
    <text evidence="1">Belongs to the RecO family.</text>
</comment>
<evidence type="ECO:0000255" key="1">
    <source>
        <dbReference type="HAMAP-Rule" id="MF_00201"/>
    </source>
</evidence>
<accession>B2IR26</accession>
<dbReference type="EMBL" id="CP001033">
    <property type="protein sequence ID" value="ACB89289.1"/>
    <property type="molecule type" value="Genomic_DNA"/>
</dbReference>
<dbReference type="RefSeq" id="WP_000616164.1">
    <property type="nucleotide sequence ID" value="NC_010582.1"/>
</dbReference>
<dbReference type="SMR" id="B2IR26"/>
<dbReference type="GeneID" id="45652453"/>
<dbReference type="KEGG" id="spw:SPCG_0038"/>
<dbReference type="HOGENOM" id="CLU_066632_4_0_9"/>
<dbReference type="GO" id="GO:0043590">
    <property type="term" value="C:bacterial nucleoid"/>
    <property type="evidence" value="ECO:0007669"/>
    <property type="project" value="TreeGrafter"/>
</dbReference>
<dbReference type="GO" id="GO:0006310">
    <property type="term" value="P:DNA recombination"/>
    <property type="evidence" value="ECO:0007669"/>
    <property type="project" value="UniProtKB-UniRule"/>
</dbReference>
<dbReference type="GO" id="GO:0006302">
    <property type="term" value="P:double-strand break repair"/>
    <property type="evidence" value="ECO:0007669"/>
    <property type="project" value="TreeGrafter"/>
</dbReference>
<dbReference type="Gene3D" id="2.40.50.140">
    <property type="entry name" value="Nucleic acid-binding proteins"/>
    <property type="match status" value="1"/>
</dbReference>
<dbReference type="Gene3D" id="1.20.1440.120">
    <property type="entry name" value="Recombination protein O, C-terminal domain"/>
    <property type="match status" value="1"/>
</dbReference>
<dbReference type="HAMAP" id="MF_00201">
    <property type="entry name" value="RecO"/>
    <property type="match status" value="1"/>
</dbReference>
<dbReference type="InterPro" id="IPR037278">
    <property type="entry name" value="ARFGAP/RecO"/>
</dbReference>
<dbReference type="InterPro" id="IPR022572">
    <property type="entry name" value="DNA_rep/recomb_RecO_N"/>
</dbReference>
<dbReference type="InterPro" id="IPR012340">
    <property type="entry name" value="NA-bd_OB-fold"/>
</dbReference>
<dbReference type="InterPro" id="IPR003717">
    <property type="entry name" value="RecO"/>
</dbReference>
<dbReference type="InterPro" id="IPR042242">
    <property type="entry name" value="RecO_C"/>
</dbReference>
<dbReference type="NCBIfam" id="TIGR00613">
    <property type="entry name" value="reco"/>
    <property type="match status" value="1"/>
</dbReference>
<dbReference type="PANTHER" id="PTHR33991">
    <property type="entry name" value="DNA REPAIR PROTEIN RECO"/>
    <property type="match status" value="1"/>
</dbReference>
<dbReference type="PANTHER" id="PTHR33991:SF1">
    <property type="entry name" value="DNA REPAIR PROTEIN RECO"/>
    <property type="match status" value="1"/>
</dbReference>
<dbReference type="Pfam" id="PF02565">
    <property type="entry name" value="RecO_C"/>
    <property type="match status" value="1"/>
</dbReference>
<dbReference type="Pfam" id="PF11967">
    <property type="entry name" value="RecO_N"/>
    <property type="match status" value="1"/>
</dbReference>
<dbReference type="SUPFAM" id="SSF57863">
    <property type="entry name" value="ArfGap/RecO-like zinc finger"/>
    <property type="match status" value="1"/>
</dbReference>
<dbReference type="SUPFAM" id="SSF50249">
    <property type="entry name" value="Nucleic acid-binding proteins"/>
    <property type="match status" value="1"/>
</dbReference>
<feature type="chain" id="PRO_1000099419" description="DNA repair protein RecO">
    <location>
        <begin position="1"/>
        <end position="256"/>
    </location>
</feature>
<name>RECO_STRPS</name>
<protein>
    <recommendedName>
        <fullName evidence="1">DNA repair protein RecO</fullName>
    </recommendedName>
    <alternativeName>
        <fullName evidence="1">Recombination protein O</fullName>
    </alternativeName>
</protein>
<gene>
    <name evidence="1" type="primary">recO</name>
    <name type="ordered locus">SPCG_0038</name>
</gene>
<organism>
    <name type="scientific">Streptococcus pneumoniae (strain CGSP14)</name>
    <dbReference type="NCBI Taxonomy" id="516950"/>
    <lineage>
        <taxon>Bacteria</taxon>
        <taxon>Bacillati</taxon>
        <taxon>Bacillota</taxon>
        <taxon>Bacilli</taxon>
        <taxon>Lactobacillales</taxon>
        <taxon>Streptococcaceae</taxon>
        <taxon>Streptococcus</taxon>
    </lineage>
</organism>
<proteinExistence type="inferred from homology"/>
<keyword id="KW-0227">DNA damage</keyword>
<keyword id="KW-0233">DNA recombination</keyword>
<keyword id="KW-0234">DNA repair</keyword>
<sequence length="256" mass="29787">MIQSITSQGLVLYNRNFREDDKLVKIFTEQVGKRMFFVKHAGQSKLAPVIQPLVLARFLLRINDDGLSYIEDYHEVMTFPKINSDLFVMAYATYVAALADASLQDNQQDAPLFAFLQKTLELMEAGLDYQVLTNIFEIQILTRFGISLNFNECVFCHRVGQAFDFSFKYGACLCPEHYHEDKRRCHLNPNIPYLLNQFQAIDFETLETISLKPGIKQELRQFMDQLYEEYVGIHLKSKKFIDSLADWGQLLKEEKK</sequence>
<reference key="1">
    <citation type="journal article" date="2009" name="BMC Genomics">
        <title>Genome evolution driven by host adaptations results in a more virulent and antimicrobial-resistant Streptococcus pneumoniae serotype 14.</title>
        <authorList>
            <person name="Ding F."/>
            <person name="Tang P."/>
            <person name="Hsu M.-H."/>
            <person name="Cui P."/>
            <person name="Hu S."/>
            <person name="Yu J."/>
            <person name="Chiu C.-H."/>
        </authorList>
    </citation>
    <scope>NUCLEOTIDE SEQUENCE [LARGE SCALE GENOMIC DNA]</scope>
    <source>
        <strain>CGSP14</strain>
    </source>
</reference>